<gene>
    <name evidence="1" type="primary">ftsB</name>
    <name type="ordered locus">plu0712</name>
</gene>
<organism>
    <name type="scientific">Photorhabdus laumondii subsp. laumondii (strain DSM 15139 / CIP 105565 / TT01)</name>
    <name type="common">Photorhabdus luminescens subsp. laumondii</name>
    <dbReference type="NCBI Taxonomy" id="243265"/>
    <lineage>
        <taxon>Bacteria</taxon>
        <taxon>Pseudomonadati</taxon>
        <taxon>Pseudomonadota</taxon>
        <taxon>Gammaproteobacteria</taxon>
        <taxon>Enterobacterales</taxon>
        <taxon>Morganellaceae</taxon>
        <taxon>Photorhabdus</taxon>
    </lineage>
</organism>
<dbReference type="EMBL" id="BX571861">
    <property type="protein sequence ID" value="CAE13007.1"/>
    <property type="molecule type" value="Genomic_DNA"/>
</dbReference>
<dbReference type="RefSeq" id="WP_011145088.1">
    <property type="nucleotide sequence ID" value="NC_005126.1"/>
</dbReference>
<dbReference type="SMR" id="Q7N8K8"/>
<dbReference type="STRING" id="243265.plu0712"/>
<dbReference type="GeneID" id="48847007"/>
<dbReference type="KEGG" id="plu:plu0712"/>
<dbReference type="eggNOG" id="COG2919">
    <property type="taxonomic scope" value="Bacteria"/>
</dbReference>
<dbReference type="HOGENOM" id="CLU_134863_5_2_6"/>
<dbReference type="OrthoDB" id="7061211at2"/>
<dbReference type="Proteomes" id="UP000002514">
    <property type="component" value="Chromosome"/>
</dbReference>
<dbReference type="GO" id="GO:0032153">
    <property type="term" value="C:cell division site"/>
    <property type="evidence" value="ECO:0007669"/>
    <property type="project" value="UniProtKB-UniRule"/>
</dbReference>
<dbReference type="GO" id="GO:0030428">
    <property type="term" value="C:cell septum"/>
    <property type="evidence" value="ECO:0007669"/>
    <property type="project" value="TreeGrafter"/>
</dbReference>
<dbReference type="GO" id="GO:0005886">
    <property type="term" value="C:plasma membrane"/>
    <property type="evidence" value="ECO:0007669"/>
    <property type="project" value="UniProtKB-SubCell"/>
</dbReference>
<dbReference type="GO" id="GO:0043093">
    <property type="term" value="P:FtsZ-dependent cytokinesis"/>
    <property type="evidence" value="ECO:0007669"/>
    <property type="project" value="UniProtKB-UniRule"/>
</dbReference>
<dbReference type="Gene3D" id="1.20.5.400">
    <property type="match status" value="1"/>
</dbReference>
<dbReference type="HAMAP" id="MF_00599">
    <property type="entry name" value="FtsB"/>
    <property type="match status" value="1"/>
</dbReference>
<dbReference type="InterPro" id="IPR023081">
    <property type="entry name" value="Cell_div_FtsB"/>
</dbReference>
<dbReference type="InterPro" id="IPR007060">
    <property type="entry name" value="FtsL/DivIC"/>
</dbReference>
<dbReference type="NCBIfam" id="NF002058">
    <property type="entry name" value="PRK00888.1"/>
    <property type="match status" value="1"/>
</dbReference>
<dbReference type="PANTHER" id="PTHR37485">
    <property type="entry name" value="CELL DIVISION PROTEIN FTSB"/>
    <property type="match status" value="1"/>
</dbReference>
<dbReference type="PANTHER" id="PTHR37485:SF1">
    <property type="entry name" value="CELL DIVISION PROTEIN FTSB"/>
    <property type="match status" value="1"/>
</dbReference>
<dbReference type="Pfam" id="PF04977">
    <property type="entry name" value="DivIC"/>
    <property type="match status" value="1"/>
</dbReference>
<name>FTSB_PHOLL</name>
<feature type="chain" id="PRO_1000025712" description="Cell division protein FtsB">
    <location>
        <begin position="1"/>
        <end position="106"/>
    </location>
</feature>
<feature type="topological domain" description="Cytoplasmic" evidence="1">
    <location>
        <begin position="1"/>
        <end position="3"/>
    </location>
</feature>
<feature type="transmembrane region" description="Helical" evidence="1">
    <location>
        <begin position="4"/>
        <end position="21"/>
    </location>
</feature>
<feature type="topological domain" description="Periplasmic" evidence="1">
    <location>
        <begin position="22"/>
        <end position="106"/>
    </location>
</feature>
<feature type="coiled-coil region" evidence="1">
    <location>
        <begin position="29"/>
        <end position="70"/>
    </location>
</feature>
<protein>
    <recommendedName>
        <fullName evidence="1">Cell division protein FtsB</fullName>
    </recommendedName>
</protein>
<proteinExistence type="inferred from homology"/>
<accession>Q7N8K8</accession>
<sequence length="106" mass="12062">MGKLTLLLLVLLGWLQYSLWLGKNGIHDYVRVKNDVAMQERNNSKLKARNDQLSAEIDDLTGGQEAIEERSRSELGMIKPGETFYRLIIDKSKENTSRPSTPNNTQ</sequence>
<evidence type="ECO:0000255" key="1">
    <source>
        <dbReference type="HAMAP-Rule" id="MF_00599"/>
    </source>
</evidence>
<comment type="function">
    <text evidence="1">Essential cell division protein. May link together the upstream cell division proteins, which are predominantly cytoplasmic, with the downstream cell division proteins, which are predominantly periplasmic.</text>
</comment>
<comment type="subunit">
    <text evidence="1">Part of a complex composed of FtsB, FtsL and FtsQ.</text>
</comment>
<comment type="subcellular location">
    <subcellularLocation>
        <location evidence="1">Cell inner membrane</location>
        <topology evidence="1">Single-pass type II membrane protein</topology>
    </subcellularLocation>
    <text evidence="1">Localizes to the division septum.</text>
</comment>
<comment type="similarity">
    <text evidence="1">Belongs to the FtsB family.</text>
</comment>
<keyword id="KW-0131">Cell cycle</keyword>
<keyword id="KW-0132">Cell division</keyword>
<keyword id="KW-0997">Cell inner membrane</keyword>
<keyword id="KW-1003">Cell membrane</keyword>
<keyword id="KW-0175">Coiled coil</keyword>
<keyword id="KW-0472">Membrane</keyword>
<keyword id="KW-1185">Reference proteome</keyword>
<keyword id="KW-0812">Transmembrane</keyword>
<keyword id="KW-1133">Transmembrane helix</keyword>
<reference key="1">
    <citation type="journal article" date="2003" name="Nat. Biotechnol.">
        <title>The genome sequence of the entomopathogenic bacterium Photorhabdus luminescens.</title>
        <authorList>
            <person name="Duchaud E."/>
            <person name="Rusniok C."/>
            <person name="Frangeul L."/>
            <person name="Buchrieser C."/>
            <person name="Givaudan A."/>
            <person name="Taourit S."/>
            <person name="Bocs S."/>
            <person name="Boursaux-Eude C."/>
            <person name="Chandler M."/>
            <person name="Charles J.-F."/>
            <person name="Dassa E."/>
            <person name="Derose R."/>
            <person name="Derzelle S."/>
            <person name="Freyssinet G."/>
            <person name="Gaudriault S."/>
            <person name="Medigue C."/>
            <person name="Lanois A."/>
            <person name="Powell K."/>
            <person name="Siguier P."/>
            <person name="Vincent R."/>
            <person name="Wingate V."/>
            <person name="Zouine M."/>
            <person name="Glaser P."/>
            <person name="Boemare N."/>
            <person name="Danchin A."/>
            <person name="Kunst F."/>
        </authorList>
    </citation>
    <scope>NUCLEOTIDE SEQUENCE [LARGE SCALE GENOMIC DNA]</scope>
    <source>
        <strain>DSM 15139 / CIP 105565 / TT01</strain>
    </source>
</reference>